<organism>
    <name type="scientific">Xenopus tropicalis</name>
    <name type="common">Western clawed frog</name>
    <name type="synonym">Silurana tropicalis</name>
    <dbReference type="NCBI Taxonomy" id="8364"/>
    <lineage>
        <taxon>Eukaryota</taxon>
        <taxon>Metazoa</taxon>
        <taxon>Chordata</taxon>
        <taxon>Craniata</taxon>
        <taxon>Vertebrata</taxon>
        <taxon>Euteleostomi</taxon>
        <taxon>Amphibia</taxon>
        <taxon>Batrachia</taxon>
        <taxon>Anura</taxon>
        <taxon>Pipoidea</taxon>
        <taxon>Pipidae</taxon>
        <taxon>Xenopodinae</taxon>
        <taxon>Xenopus</taxon>
        <taxon>Silurana</taxon>
    </lineage>
</organism>
<comment type="function">
    <text evidence="1">Microtubule plus-end tracking protein that promotes the stabilization of dynamic microtubules during anaphase. Plays a crucial role in chromatin-induced microtubule formation. May also act at microtubule minus ends. May be involved in the nucleation of noncentrosomal microtubules originating from the trans-Golgi network (TGN) (By similarity).</text>
</comment>
<comment type="subunit">
    <text evidence="6">Interacts (via C-terminus) with clip1/clip-170, and cenpe.</text>
</comment>
<comment type="subcellular location">
    <subcellularLocation>
        <location evidence="2">Cytoplasm</location>
        <location evidence="2">Cytoskeleton</location>
    </subcellularLocation>
    <subcellularLocation>
        <location evidence="2">Cytoplasm</location>
        <location evidence="2">Cytoskeleton</location>
        <location evidence="2">Microtubule organizing center</location>
        <location evidence="2">Centrosome</location>
    </subcellularLocation>
    <subcellularLocation>
        <location evidence="2">Chromosome</location>
        <location evidence="2">Centromere</location>
        <location evidence="2">Kinetochore</location>
    </subcellularLocation>
    <subcellularLocation>
        <location evidence="2">Cytoplasm</location>
        <location evidence="2">Cytoskeleton</location>
        <location evidence="2">Spindle</location>
    </subcellularLocation>
    <subcellularLocation>
        <location evidence="1">Golgi apparatus</location>
        <location evidence="1">trans-Golgi network</location>
    </subcellularLocation>
    <text evidence="2">Localizes to microtubule plus ends. Associates with spindle microtubules, spindle poles, and kinetochores during metaphase, and shifts to the central spindle in late anaphase (By similarity).</text>
</comment>
<comment type="similarity">
    <text evidence="4">Belongs to the CLASP family.</text>
</comment>
<reference evidence="8" key="1">
    <citation type="submission" date="2006-12" db="EMBL/GenBank/DDBJ databases">
        <authorList>
            <consortium name="NIH - Xenopus Gene Collection (XGC) project"/>
        </authorList>
    </citation>
    <scope>NUCLEOTIDE SEQUENCE [LARGE SCALE MRNA]</scope>
    <source>
        <tissue evidence="8">Testis</tissue>
    </source>
</reference>
<reference evidence="7" key="2">
    <citation type="journal article" date="2006" name="J. Cell Biol.">
        <title>Xorbit/CLASP links dynamic microtubules to chromosomes in the Xenopus meiotic spindle.</title>
        <authorList>
            <person name="Hannak E."/>
            <person name="Heald R."/>
        </authorList>
    </citation>
    <scope>INTERACTION WITH CLIP1 AND CENPE</scope>
</reference>
<name>CLAP1_XENTR</name>
<sequence>MEQGMDYWLGQIQQKDVGKRLQVGPDLMEYLSDRQKSIDLEQDQTVLDRMVDGLATSWVNSSNYKVALLGMDILSALVTRLQDRFRSQIGTVLPSLMDRLGDAKDSVREQDQNLLIKIMEQASNPQYVWERMFSGFKHKNFRTREGVCLCLIATLNVYGAHSLTLSKIVPHICNLLGDPNSQVRDAAINCLVEIYRHVGERVRADLSKKGLPQSRLNVIFTKFDEVQKSGTMILSSADKNFDDEDSVDGNRPSSASSSASSKAPQAARRGVSLGTARRPGTSSAAPKPGGTAKEGAGGVDEEDFIRGFEDVPTVQIYSSRDLEESLNKIREILSDDKHDWEQRISALKKIRSLLLAGAAEYDTFFPQLRLLDGAFKLSAKDLRSQVVREACITLGHLSSVLGNKFDHGAEAIMPTVFNLVPNSAKIMATSGVVAIRLIIRQTHVPRLIPIITSNCTSKSVAVRRRCYEFLDLLLQEWQTHSLERHVSVLAETIKKGIHDADSEARIVARKCYWGFHSHFSKEAEQLFHTLESSYQKALQSHLKNSDSIVSLPQSDRSSSSSQESLNRPLSAKRSPTGSTVSRASTATSKSTPGSLQRSRSDIDVNAATCAKSKATSGASAAPFSSVAALPPGSYASLGRIRTRRQSSGSTTSTASTPADTRGRSRAKVVSQSQPGSRSSSPGKLLGSGYGGIASGPQRVPQMPSSEKRSKIPRSQGCSRETSPSRIGLDRFGISQPGRIPSAMRVLSSSTDLEAAVADALKKPVRRRYEPYGMYSDDDANSDASSACSERSYSSKNGGIPHYLRQTEDVAEVLNHCASSNWSERKEGLIGLQNLLKSQRTLSRVELKRLCEIFTRMFADPHSKRVFSMFLETLVDFVIIHKDDLQDWLFILLTQLLKKMGADLLGSVQAKVQKALDVTRDSFPFDQQFNILMRFIVDQTQTPNLKVKVAILKYIESLARQMDPTDFVNSSETRLAVSRIITWTTEPKSSDVRKAAQVVLISLFELNTPEFTMLLGALPKTFQDGATKLLHNHLKNSSNSSMGSPSNTIGRTPSRHSSSRASPLTSPTNCSHGGLSPSMLDYDTENLNSDEIYSSLRGVTEAIEKFSFRSQVDLNEPVRREGKKESELGSCDVGIASPASDLRGGTDMVEGGRMALDNKTSLLNTQPPRAFTGPRGREYNPYAYSDSINSYDKTALKEAVFDDDMDQLRDVPIDHSDLVADLLKELSNHNERVEERKGALCELLKITREDSLAVWEEHFKTILLLLLETLGDKDHAIRALALRVLREILRNQPARFKNYAELTIMKTLEAHKDSHKEVVRAAEEAASTLAGSIHPEQCIKVLCPIIQTADYPINLAAIKMQTKVIERISKESLHQILPDIIPGLLQGYDNTESSVRKASVFCLVAIYSVIGEELKPYLAQLTGGKMKLLNLYIKRAQTTNSNSSSSSDVSTHS</sequence>
<proteinExistence type="evidence at protein level"/>
<keyword id="KW-0131">Cell cycle</keyword>
<keyword id="KW-0132">Cell division</keyword>
<keyword id="KW-0137">Centromere</keyword>
<keyword id="KW-0158">Chromosome</keyword>
<keyword id="KW-0963">Cytoplasm</keyword>
<keyword id="KW-0206">Cytoskeleton</keyword>
<keyword id="KW-0333">Golgi apparatus</keyword>
<keyword id="KW-0995">Kinetochore</keyword>
<keyword id="KW-0493">Microtubule</keyword>
<keyword id="KW-0498">Mitosis</keyword>
<keyword id="KW-1185">Reference proteome</keyword>
<keyword id="KW-0677">Repeat</keyword>
<accession>A1A5G0</accession>
<gene>
    <name evidence="9" type="primary">clasp1</name>
</gene>
<dbReference type="EMBL" id="BC128634">
    <property type="protein sequence ID" value="AAI28635.1"/>
    <property type="molecule type" value="mRNA"/>
</dbReference>
<dbReference type="RefSeq" id="NP_001090708.1">
    <property type="nucleotide sequence ID" value="NM_001097239.1"/>
</dbReference>
<dbReference type="SMR" id="A1A5G0"/>
<dbReference type="FunCoup" id="A1A5G0">
    <property type="interactions" value="1902"/>
</dbReference>
<dbReference type="DNASU" id="100036688"/>
<dbReference type="GeneID" id="100036688"/>
<dbReference type="KEGG" id="xtr:100036688"/>
<dbReference type="AGR" id="Xenbase:XB-GENE-6049805"/>
<dbReference type="CTD" id="23332"/>
<dbReference type="Xenbase" id="XB-GENE-6049805">
    <property type="gene designation" value="clasp1"/>
</dbReference>
<dbReference type="InParanoid" id="A1A5G0"/>
<dbReference type="OMA" id="KMRHNWL"/>
<dbReference type="OrthoDB" id="46159at2759"/>
<dbReference type="Reactome" id="R-XTR-141444">
    <property type="pathway name" value="Amplification of signal from unattached kinetochores via a MAD2 inhibitory signal"/>
</dbReference>
<dbReference type="Reactome" id="R-XTR-2467813">
    <property type="pathway name" value="Separation of Sister Chromatids"/>
</dbReference>
<dbReference type="Reactome" id="R-XTR-2500257">
    <property type="pathway name" value="Resolution of Sister Chromatid Cohesion"/>
</dbReference>
<dbReference type="Reactome" id="R-XTR-2565942">
    <property type="pathway name" value="Regulation of PLK1 Activity at G2/M Transition"/>
</dbReference>
<dbReference type="Reactome" id="R-XTR-380259">
    <property type="pathway name" value="Loss of Nlp from mitotic centrosomes"/>
</dbReference>
<dbReference type="Reactome" id="R-XTR-380270">
    <property type="pathway name" value="Recruitment of mitotic centrosome proteins and complexes"/>
</dbReference>
<dbReference type="Reactome" id="R-XTR-380320">
    <property type="pathway name" value="Recruitment of NuMA to mitotic centrosomes"/>
</dbReference>
<dbReference type="Reactome" id="R-XTR-5620912">
    <property type="pathway name" value="Anchoring of the basal body to the plasma membrane"/>
</dbReference>
<dbReference type="Reactome" id="R-XTR-5663220">
    <property type="pathway name" value="RHO GTPases Activate Formins"/>
</dbReference>
<dbReference type="Reactome" id="R-XTR-68877">
    <property type="pathway name" value="Mitotic Prometaphase"/>
</dbReference>
<dbReference type="Reactome" id="R-XTR-8854518">
    <property type="pathway name" value="AURKA Activation by TPX2"/>
</dbReference>
<dbReference type="Reactome" id="R-XTR-9648025">
    <property type="pathway name" value="EML4 and NUDC in mitotic spindle formation"/>
</dbReference>
<dbReference type="Proteomes" id="UP000008143">
    <property type="component" value="Chromosome 9"/>
</dbReference>
<dbReference type="GO" id="GO:0005813">
    <property type="term" value="C:centrosome"/>
    <property type="evidence" value="ECO:0007669"/>
    <property type="project" value="UniProtKB-SubCell"/>
</dbReference>
<dbReference type="GO" id="GO:0005794">
    <property type="term" value="C:Golgi apparatus"/>
    <property type="evidence" value="ECO:0007669"/>
    <property type="project" value="UniProtKB-SubCell"/>
</dbReference>
<dbReference type="GO" id="GO:0000776">
    <property type="term" value="C:kinetochore"/>
    <property type="evidence" value="ECO:0007669"/>
    <property type="project" value="UniProtKB-KW"/>
</dbReference>
<dbReference type="GO" id="GO:0005874">
    <property type="term" value="C:microtubule"/>
    <property type="evidence" value="ECO:0007669"/>
    <property type="project" value="UniProtKB-KW"/>
</dbReference>
<dbReference type="GO" id="GO:0005819">
    <property type="term" value="C:spindle"/>
    <property type="evidence" value="ECO:0007669"/>
    <property type="project" value="UniProtKB-SubCell"/>
</dbReference>
<dbReference type="GO" id="GO:0051301">
    <property type="term" value="P:cell division"/>
    <property type="evidence" value="ECO:0007669"/>
    <property type="project" value="UniProtKB-KW"/>
</dbReference>
<dbReference type="GO" id="GO:0034453">
    <property type="term" value="P:microtubule anchoring"/>
    <property type="evidence" value="ECO:0000250"/>
    <property type="project" value="UniProtKB"/>
</dbReference>
<dbReference type="GO" id="GO:0007020">
    <property type="term" value="P:microtubule nucleation"/>
    <property type="evidence" value="ECO:0000250"/>
    <property type="project" value="UniProtKB"/>
</dbReference>
<dbReference type="GO" id="GO:0031023">
    <property type="term" value="P:microtubule organizing center organization"/>
    <property type="evidence" value="ECO:0000250"/>
    <property type="project" value="UniProtKB"/>
</dbReference>
<dbReference type="GO" id="GO:0031110">
    <property type="term" value="P:regulation of microtubule polymerization or depolymerization"/>
    <property type="evidence" value="ECO:0007669"/>
    <property type="project" value="UniProtKB-ARBA"/>
</dbReference>
<dbReference type="GO" id="GO:1902903">
    <property type="term" value="P:regulation of supramolecular fiber organization"/>
    <property type="evidence" value="ECO:0007669"/>
    <property type="project" value="UniProtKB-ARBA"/>
</dbReference>
<dbReference type="FunFam" id="1.25.10.10:FF:000001">
    <property type="entry name" value="CLIP-associating protein 1 isoform 2"/>
    <property type="match status" value="1"/>
</dbReference>
<dbReference type="FunFam" id="1.25.10.10:FF:000005">
    <property type="entry name" value="CLIP-associating protein 1 isoform 2"/>
    <property type="match status" value="1"/>
</dbReference>
<dbReference type="FunFam" id="1.25.10.10:FF:000006">
    <property type="entry name" value="CLIP-associating protein 1 isoform 2"/>
    <property type="match status" value="1"/>
</dbReference>
<dbReference type="FunFam" id="1.25.10.10:FF:000031">
    <property type="entry name" value="CLIP-associating protein 1 isoform 2"/>
    <property type="match status" value="1"/>
</dbReference>
<dbReference type="Gene3D" id="1.25.10.10">
    <property type="entry name" value="Leucine-rich Repeat Variant"/>
    <property type="match status" value="4"/>
</dbReference>
<dbReference type="InterPro" id="IPR011989">
    <property type="entry name" value="ARM-like"/>
</dbReference>
<dbReference type="InterPro" id="IPR016024">
    <property type="entry name" value="ARM-type_fold"/>
</dbReference>
<dbReference type="InterPro" id="IPR024395">
    <property type="entry name" value="CLASP_N_dom"/>
</dbReference>
<dbReference type="InterPro" id="IPR021133">
    <property type="entry name" value="HEAT_type_2"/>
</dbReference>
<dbReference type="InterPro" id="IPR034085">
    <property type="entry name" value="TOG"/>
</dbReference>
<dbReference type="PANTHER" id="PTHR21567">
    <property type="entry name" value="CLASP"/>
    <property type="match status" value="1"/>
</dbReference>
<dbReference type="PANTHER" id="PTHR21567:SF28">
    <property type="entry name" value="CLIP-ASSOCIATING PROTEIN 1"/>
    <property type="match status" value="1"/>
</dbReference>
<dbReference type="Pfam" id="PF12348">
    <property type="entry name" value="CLASP_N"/>
    <property type="match status" value="2"/>
</dbReference>
<dbReference type="SMART" id="SM01349">
    <property type="entry name" value="TOG"/>
    <property type="match status" value="4"/>
</dbReference>
<dbReference type="SUPFAM" id="SSF48371">
    <property type="entry name" value="ARM repeat"/>
    <property type="match status" value="2"/>
</dbReference>
<dbReference type="PROSITE" id="PS50077">
    <property type="entry name" value="HEAT_REPEAT"/>
    <property type="match status" value="1"/>
</dbReference>
<protein>
    <recommendedName>
        <fullName evidence="3">CLIP-associating protein 1</fullName>
    </recommendedName>
    <alternativeName>
        <fullName evidence="9">Cytoplasmic linker-associated protein 1</fullName>
    </alternativeName>
</protein>
<evidence type="ECO:0000250" key="1"/>
<evidence type="ECO:0000250" key="2">
    <source>
        <dbReference type="UniProtKB" id="A1A5K2"/>
    </source>
</evidence>
<evidence type="ECO:0000250" key="3">
    <source>
        <dbReference type="UniProtKB" id="Q7Z460"/>
    </source>
</evidence>
<evidence type="ECO:0000255" key="4"/>
<evidence type="ECO:0000256" key="5">
    <source>
        <dbReference type="SAM" id="MobiDB-lite"/>
    </source>
</evidence>
<evidence type="ECO:0000269" key="6">
    <source>
    </source>
</evidence>
<evidence type="ECO:0000305" key="7"/>
<evidence type="ECO:0000312" key="8">
    <source>
        <dbReference type="EMBL" id="AAI28635.1"/>
    </source>
</evidence>
<evidence type="ECO:0000312" key="9">
    <source>
        <dbReference type="Xenbase" id="XB-GENE-6049805"/>
    </source>
</evidence>
<feature type="chain" id="PRO_0000397921" description="CLIP-associating protein 1">
    <location>
        <begin position="1"/>
        <end position="1452"/>
    </location>
</feature>
<feature type="repeat" description="HEAT 1" evidence="4">
    <location>
        <begin position="68"/>
        <end position="87"/>
    </location>
</feature>
<feature type="repeat" description="HEAT 2" evidence="4">
    <location>
        <begin position="88"/>
        <end position="124"/>
    </location>
</feature>
<feature type="repeat" description="HEAT 3" evidence="4">
    <location>
        <begin position="163"/>
        <end position="200"/>
    </location>
</feature>
<feature type="repeat" description="HEAT 4" evidence="4">
    <location>
        <begin position="407"/>
        <end position="442"/>
    </location>
</feature>
<feature type="repeat" description="HEAT 5" evidence="4">
    <location>
        <begin position="443"/>
        <end position="479"/>
    </location>
</feature>
<feature type="repeat" description="HEAT 6" evidence="4">
    <location>
        <begin position="926"/>
        <end position="963"/>
    </location>
</feature>
<feature type="repeat" description="HEAT 7" evidence="4">
    <location>
        <begin position="1256"/>
        <end position="1293"/>
    </location>
</feature>
<feature type="repeat" description="HEAT 8" evidence="4">
    <location>
        <begin position="1374"/>
        <end position="1411"/>
    </location>
</feature>
<feature type="region of interest" description="Disordered" evidence="5">
    <location>
        <begin position="239"/>
        <end position="299"/>
    </location>
</feature>
<feature type="region of interest" description="Disordered" evidence="5">
    <location>
        <begin position="545"/>
        <end position="735"/>
    </location>
</feature>
<feature type="region of interest" description="Disordered" evidence="5">
    <location>
        <begin position="771"/>
        <end position="792"/>
    </location>
</feature>
<feature type="region of interest" description="Disordered" evidence="5">
    <location>
        <begin position="1033"/>
        <end position="1076"/>
    </location>
</feature>
<feature type="compositionally biased region" description="Low complexity" evidence="5">
    <location>
        <begin position="253"/>
        <end position="267"/>
    </location>
</feature>
<feature type="compositionally biased region" description="Low complexity" evidence="5">
    <location>
        <begin position="550"/>
        <end position="569"/>
    </location>
</feature>
<feature type="compositionally biased region" description="Polar residues" evidence="5">
    <location>
        <begin position="573"/>
        <end position="597"/>
    </location>
</feature>
<feature type="compositionally biased region" description="Low complexity" evidence="5">
    <location>
        <begin position="606"/>
        <end position="621"/>
    </location>
</feature>
<feature type="compositionally biased region" description="Low complexity" evidence="5">
    <location>
        <begin position="645"/>
        <end position="659"/>
    </location>
</feature>
<feature type="compositionally biased region" description="Low complexity" evidence="5">
    <location>
        <begin position="668"/>
        <end position="682"/>
    </location>
</feature>
<feature type="compositionally biased region" description="Polar residues" evidence="5">
    <location>
        <begin position="715"/>
        <end position="724"/>
    </location>
</feature>
<feature type="compositionally biased region" description="Low complexity" evidence="5">
    <location>
        <begin position="781"/>
        <end position="792"/>
    </location>
</feature>
<feature type="compositionally biased region" description="Low complexity" evidence="5">
    <location>
        <begin position="1034"/>
        <end position="1046"/>
    </location>
</feature>
<feature type="compositionally biased region" description="Polar residues" evidence="5">
    <location>
        <begin position="1058"/>
        <end position="1070"/>
    </location>
</feature>